<name>Y118_ABVP</name>
<gene>
    <name type="ORF">ORF188</name>
</gene>
<dbReference type="EMBL" id="EF432053">
    <property type="protein sequence ID" value="ABP73429.1"/>
    <property type="molecule type" value="Genomic_DNA"/>
</dbReference>
<dbReference type="RefSeq" id="YP_001210343.1">
    <property type="nucleotide sequence ID" value="NC_009452.1"/>
</dbReference>
<dbReference type="GeneID" id="5129805"/>
<dbReference type="KEGG" id="vg:5129805"/>
<dbReference type="Proteomes" id="UP000000513">
    <property type="component" value="Segment"/>
</dbReference>
<dbReference type="InterPro" id="IPR018247">
    <property type="entry name" value="EF_Hand_1_Ca_BS"/>
</dbReference>
<reference key="1">
    <citation type="journal article" date="2007" name="Virology">
        <title>Genome of the Acidianus bottle-shaped virus and insights into the replication and packaging mechanisms.</title>
        <authorList>
            <person name="Peng X."/>
            <person name="Basta T."/>
            <person name="Haring M."/>
            <person name="Garrett R.A."/>
            <person name="Prangishvili D."/>
        </authorList>
    </citation>
    <scope>NUCLEOTIDE SEQUENCE [GENOMIC DNA]</scope>
</reference>
<protein>
    <recommendedName>
        <fullName>Uncharacterized protein ORF188</fullName>
    </recommendedName>
</protein>
<feature type="chain" id="PRO_0000384855" description="Uncharacterized protein ORF188">
    <location>
        <begin position="1"/>
        <end position="188"/>
    </location>
</feature>
<sequence>MSLVESINKFLSFADHDLIVYDIILGSILGGIGVSFNQASLIDDFPNIIELIIGSMMLLNKGFEPFLRSLGFVLTADGFSSLVNKVFTSEECKNCIPFDCLIAPLPADVVYANSESNDPPLIAIGPRVFFNLQKPECREYFERLQKYNEQNFYKRFIHHRYLGESIAIDPNQNQTISESEFSESTSSE</sequence>
<keyword id="KW-1185">Reference proteome</keyword>
<organismHost>
    <name type="scientific">Acidianus convivator</name>
    <dbReference type="NCBI Taxonomy" id="269667"/>
</organismHost>
<proteinExistence type="predicted"/>
<accession>A4ZUC5</accession>
<organism>
    <name type="scientific">Acidianus bottle-shaped virus (isolate Italy/Pozzuoli)</name>
    <name type="common">ABV</name>
    <dbReference type="NCBI Taxonomy" id="654911"/>
    <lineage>
        <taxon>Viruses</taxon>
        <taxon>Viruses incertae sedis</taxon>
        <taxon>Ampullaviridae</taxon>
        <taxon>Bottigliavirus</taxon>
        <taxon>Bottigliavirus ABV</taxon>
    </lineage>
</organism>